<comment type="function">
    <text evidence="4 5 6 8">Calcium-binding chaperone that promotes folding, oligomeric assembly and quality control in the endoplasmic reticulum (ER) via the calreticulin/calnexin cycle (PubMed:10581245). This lectin interacts transiently with almost all of the monoglucosylated glycoproteins that are synthesized in the ER. Interacts with the DNA-binding domain of NR3C1 and mediates its nuclear export (By similarity). Involved in maternal gene expression regulation. May participate in oocyte maturation via the regulation of calcium homeostasis (By similarity). Present in the cortical granules of non-activated oocytes, is exocytosed during the cortical reaction in response to oocyte activation and might participate in the block to polyspermy (By similarity).</text>
</comment>
<comment type="subunit">
    <text evidence="2 3 4">Monomer. Component of an EIF2 complex at least composed of CELF1/CUGBP1, CALR, CALR3, EIF2S1, EIF2S2, HSP90B1 and HSPA5. Interacts with PDIA3/ERp57 and SPACA9 (By similarity). Interacts with TRIM21. Interacts with NR3C1. Interacts with PPIB. Interacts (via P-domain) with PDIA5. Interacts with CLCC1 (By similarity).</text>
</comment>
<comment type="interaction">
    <interactant intactId="EBI-9005200">
        <id>P15253</id>
    </interactant>
    <interactant intactId="EBI-77613">
        <id>P05067</id>
        <label>APP</label>
    </interactant>
    <organismsDiffer>true</organismsDiffer>
    <experiments>3</experiments>
</comment>
<comment type="interaction">
    <interactant intactId="EBI-9005200">
        <id>P15253</id>
    </interactant>
    <interactant intactId="EBI-821758">
        <id>PRO_0000000092</id>
        <label>APP</label>
        <dbReference type="UniProtKB" id="P05067"/>
    </interactant>
    <organismsDiffer>true</organismsDiffer>
    <experiments>2</experiments>
</comment>
<comment type="interaction">
    <interactant intactId="EBI-9005200">
        <id>P15253</id>
    </interactant>
    <interactant intactId="EBI-2431589">
        <id>PRO_0000000093</id>
        <label>APP</label>
        <dbReference type="UniProtKB" id="P05067"/>
    </interactant>
    <organismsDiffer>true</organismsDiffer>
    <experiments>2</experiments>
</comment>
<comment type="interaction">
    <interactant intactId="EBI-9005200">
        <id>P15253</id>
    </interactant>
    <interactant intactId="EBI-78814">
        <id>P12023</id>
        <label>App</label>
    </interactant>
    <organismsDiffer>true</organismsDiffer>
    <experiments>2</experiments>
</comment>
<comment type="subcellular location">
    <subcellularLocation>
        <location evidence="4">Endoplasmic reticulum lumen</location>
    </subcellularLocation>
    <subcellularLocation>
        <location evidence="4">Cytoplasm</location>
        <location evidence="4">Cytosol</location>
    </subcellularLocation>
    <subcellularLocation>
        <location evidence="4">Secreted</location>
        <location evidence="4">Extracellular space</location>
        <location evidence="4">Extracellular matrix</location>
    </subcellularLocation>
    <subcellularLocation>
        <location evidence="4">Cell surface</location>
    </subcellularLocation>
    <subcellularLocation>
        <location evidence="5">Sarcoplasmic reticulum lumen</location>
    </subcellularLocation>
    <subcellularLocation>
        <location evidence="6">Cytoplasmic vesicle</location>
        <location evidence="6">Secretory vesicle</location>
        <location evidence="6">Cortical granule</location>
    </subcellularLocation>
    <subcellularLocation>
        <location evidence="4">Cytolytic granule</location>
    </subcellularLocation>
    <text evidence="4 5 6">Also found in cell surface (T cells), cytosol and extracellular matrix. During oocyte maturation and after parthenogenetic activation accumulates in cortical granules. In pronuclear and early cleaved embryos localizes weakly to cytoplasm around nucleus and more strongly in the region near the cortex (By similarity). In cortical granules of non-activated oocytes, is exocytosed during the cortical reaction in response to oocyte activation (By similarity).</text>
</comment>
<comment type="domain">
    <text evidence="1">Can be divided into a N-terminal globular domain, a proline-rich P-domain forming an elongated arm-like structure and a C-terminal acidic domain. The P-domain binds one molecule of calcium with high affinity, whereas the acidic C-domain binds multiple calcium ions with low affinity (By similarity).</text>
</comment>
<comment type="domain">
    <text evidence="1">The interaction with glycans occurs through a binding site in the globular lectin domain.</text>
</comment>
<comment type="domain">
    <text>The zinc binding sites are localized to the N-domain.</text>
</comment>
<comment type="domain">
    <text evidence="1">Associates with PDIA3 through the tip of the extended arm formed by the P-domain.</text>
</comment>
<comment type="similarity">
    <text evidence="12">Belongs to the calreticulin family.</text>
</comment>
<gene>
    <name type="primary">CALR</name>
</gene>
<protein>
    <recommendedName>
        <fullName>Calreticulin</fullName>
    </recommendedName>
    <alternativeName>
        <fullName>CRP55</fullName>
    </alternativeName>
    <alternativeName>
        <fullName>Calregulin</fullName>
    </alternativeName>
    <alternativeName>
        <fullName>Endoplasmic reticulum resident protein 60</fullName>
        <shortName>ERp60</shortName>
    </alternativeName>
    <alternativeName>
        <fullName>HACBP</fullName>
    </alternativeName>
</protein>
<feature type="signal peptide" evidence="10 11">
    <location>
        <begin position="1"/>
        <end position="17"/>
    </location>
</feature>
<feature type="chain" id="PRO_0000004176" description="Calreticulin">
    <location>
        <begin position="18"/>
        <end position="418"/>
    </location>
</feature>
<feature type="repeat" description="1-1">
    <location>
        <begin position="191"/>
        <end position="202"/>
    </location>
</feature>
<feature type="repeat" description="1-2">
    <location>
        <begin position="210"/>
        <end position="221"/>
    </location>
</feature>
<feature type="repeat" description="1-3">
    <location>
        <begin position="227"/>
        <end position="238"/>
    </location>
</feature>
<feature type="repeat" description="1-4">
    <location>
        <begin position="244"/>
        <end position="255"/>
    </location>
</feature>
<feature type="repeat" description="2-1">
    <location>
        <begin position="259"/>
        <end position="269"/>
    </location>
</feature>
<feature type="repeat" description="2-2">
    <location>
        <begin position="273"/>
        <end position="283"/>
    </location>
</feature>
<feature type="repeat" description="2-3">
    <location>
        <begin position="287"/>
        <end position="297"/>
    </location>
</feature>
<feature type="region of interest" description="N-domain">
    <location>
        <begin position="18"/>
        <end position="197"/>
    </location>
</feature>
<feature type="region of interest" description="4 X approximate repeats">
    <location>
        <begin position="191"/>
        <end position="255"/>
    </location>
</feature>
<feature type="region of interest" description="Disordered" evidence="7">
    <location>
        <begin position="193"/>
        <end position="277"/>
    </location>
</feature>
<feature type="region of interest" description="P-domain">
    <location>
        <begin position="198"/>
        <end position="308"/>
    </location>
</feature>
<feature type="region of interest" description="Interaction with PPIB" evidence="1">
    <location>
        <begin position="237"/>
        <end position="270"/>
    </location>
</feature>
<feature type="region of interest" description="3 X approximate repeats">
    <location>
        <begin position="259"/>
        <end position="297"/>
    </location>
</feature>
<feature type="region of interest" description="C-domain">
    <location>
        <begin position="309"/>
        <end position="418"/>
    </location>
</feature>
<feature type="region of interest" description="Disordered" evidence="7">
    <location>
        <begin position="349"/>
        <end position="418"/>
    </location>
</feature>
<feature type="short sequence motif" description="Prevents secretion from ER">
    <location>
        <begin position="415"/>
        <end position="418"/>
    </location>
</feature>
<feature type="compositionally biased region" description="Basic and acidic residues" evidence="7">
    <location>
        <begin position="207"/>
        <end position="251"/>
    </location>
</feature>
<feature type="compositionally biased region" description="Acidic residues" evidence="7">
    <location>
        <begin position="252"/>
        <end position="261"/>
    </location>
</feature>
<feature type="compositionally biased region" description="Basic and acidic residues" evidence="7">
    <location>
        <begin position="352"/>
        <end position="379"/>
    </location>
</feature>
<feature type="compositionally biased region" description="Acidic residues" evidence="7">
    <location>
        <begin position="380"/>
        <end position="409"/>
    </location>
</feature>
<feature type="binding site" evidence="1">
    <location>
        <position position="26"/>
    </location>
    <ligand>
        <name>Ca(2+)</name>
        <dbReference type="ChEBI" id="CHEBI:29108"/>
    </ligand>
</feature>
<feature type="binding site" evidence="1">
    <location>
        <position position="62"/>
    </location>
    <ligand>
        <name>Ca(2+)</name>
        <dbReference type="ChEBI" id="CHEBI:29108"/>
    </ligand>
</feature>
<feature type="binding site" evidence="1">
    <location>
        <position position="64"/>
    </location>
    <ligand>
        <name>Ca(2+)</name>
        <dbReference type="ChEBI" id="CHEBI:29108"/>
    </ligand>
</feature>
<feature type="binding site" evidence="2">
    <location>
        <position position="109"/>
    </location>
    <ligand>
        <name>an alpha-D-glucoside</name>
        <dbReference type="ChEBI" id="CHEBI:22390"/>
    </ligand>
</feature>
<feature type="binding site" evidence="2">
    <location>
        <position position="111"/>
    </location>
    <ligand>
        <name>an alpha-D-glucoside</name>
        <dbReference type="ChEBI" id="CHEBI:22390"/>
    </ligand>
</feature>
<feature type="binding site" evidence="2">
    <location>
        <position position="128"/>
    </location>
    <ligand>
        <name>an alpha-D-glucoside</name>
        <dbReference type="ChEBI" id="CHEBI:22390"/>
    </ligand>
</feature>
<feature type="binding site" evidence="2">
    <location>
        <position position="135"/>
    </location>
    <ligand>
        <name>an alpha-D-glucoside</name>
        <dbReference type="ChEBI" id="CHEBI:22390"/>
    </ligand>
</feature>
<feature type="binding site" evidence="2">
    <location>
        <position position="317"/>
    </location>
    <ligand>
        <name>an alpha-D-glucoside</name>
        <dbReference type="ChEBI" id="CHEBI:22390"/>
    </ligand>
</feature>
<feature type="binding site" evidence="1">
    <location>
        <position position="328"/>
    </location>
    <ligand>
        <name>Ca(2+)</name>
        <dbReference type="ChEBI" id="CHEBI:29108"/>
    </ligand>
</feature>
<feature type="modified residue" description="N6-acetyllysine" evidence="4">
    <location>
        <position position="48"/>
    </location>
</feature>
<feature type="modified residue" description="N6-(2-hydroxyisobutyryl)lysine" evidence="4">
    <location>
        <position position="64"/>
    </location>
</feature>
<feature type="modified residue" description="N6-acetyllysine" evidence="4">
    <location>
        <position position="159"/>
    </location>
</feature>
<feature type="modified residue" description="N6-acetyllysine" evidence="4">
    <location>
        <position position="209"/>
    </location>
</feature>
<feature type="disulfide bond" evidence="1">
    <location>
        <begin position="105"/>
        <end position="137"/>
    </location>
</feature>
<feature type="sequence variant">
    <original>E</original>
    <variation>D</variation>
    <location>
        <position position="35"/>
    </location>
</feature>
<feature type="mutagenesis site" description="Loss of activity." evidence="9">
    <original>H</original>
    <variation>A</variation>
    <location>
        <position position="170"/>
    </location>
</feature>
<feature type="sequence conflict" description="In Ref. 5; AA sequence." evidence="12" ref="5">
    <original>P</original>
    <variation>T</variation>
    <location>
        <position position="90"/>
    </location>
</feature>
<evidence type="ECO:0000250" key="1"/>
<evidence type="ECO:0000250" key="2">
    <source>
        <dbReference type="UniProtKB" id="P14211"/>
    </source>
</evidence>
<evidence type="ECO:0000250" key="3">
    <source>
        <dbReference type="UniProtKB" id="P18418"/>
    </source>
</evidence>
<evidence type="ECO:0000250" key="4">
    <source>
        <dbReference type="UniProtKB" id="P27797"/>
    </source>
</evidence>
<evidence type="ECO:0000250" key="5">
    <source>
        <dbReference type="UniProtKB" id="P28491"/>
    </source>
</evidence>
<evidence type="ECO:0000250" key="6">
    <source>
        <dbReference type="UniProtKB" id="Q8K3H7"/>
    </source>
</evidence>
<evidence type="ECO:0000256" key="7">
    <source>
        <dbReference type="SAM" id="MobiDB-lite"/>
    </source>
</evidence>
<evidence type="ECO:0000269" key="8">
    <source>
    </source>
</evidence>
<evidence type="ECO:0000269" key="9">
    <source>
    </source>
</evidence>
<evidence type="ECO:0000269" key="10">
    <source>
    </source>
</evidence>
<evidence type="ECO:0000269" key="11">
    <source>
    </source>
</evidence>
<evidence type="ECO:0000305" key="12"/>
<keyword id="KW-0007">Acetylation</keyword>
<keyword id="KW-0106">Calcium</keyword>
<keyword id="KW-0143">Chaperone</keyword>
<keyword id="KW-0963">Cytoplasm</keyword>
<keyword id="KW-0968">Cytoplasmic vesicle</keyword>
<keyword id="KW-0903">Direct protein sequencing</keyword>
<keyword id="KW-1015">Disulfide bond</keyword>
<keyword id="KW-0256">Endoplasmic reticulum</keyword>
<keyword id="KW-0272">Extracellular matrix</keyword>
<keyword id="KW-0379">Hydroxylation</keyword>
<keyword id="KW-0430">Lectin</keyword>
<keyword id="KW-0458">Lysosome</keyword>
<keyword id="KW-0479">Metal-binding</keyword>
<keyword id="KW-1185">Reference proteome</keyword>
<keyword id="KW-0677">Repeat</keyword>
<keyword id="KW-0703">Sarcoplasmic reticulum</keyword>
<keyword id="KW-0964">Secreted</keyword>
<keyword id="KW-0732">Signal</keyword>
<keyword id="KW-0862">Zinc</keyword>
<sequence length="418" mass="48275">MLLPVPLLLGLLGLAAAEPVVYFKEQFLDGDGWTERWIESKHKSDFGKFVLSSGKFYGDQEKDKGLQTSQDARFYALSARFEPFSNKGQPLVVQFTVKHEQNIDCGGGYVKLFPAGLDQKDMHGDSEYNIMFGPDICGPGTKKVHVIFNYKGKNVLINKDIRCKDDEFTHLYTLIVRPDNTYEVKIDNSQVESGSLEDDWDFLPPKKIKDPDASKPEDWDERAKIDDPTDSKPEDWDKPEHIPDPDAKKPEDWDEEMDGEWEPPVIQNPEYKGEWKPRQIDNPDYKGTWIHPEIDNPEYSPDANIYAYDSFAVLGLDLWQVKSGTIFDNFLITNDEAYAEEFGNETWGVTKTAEKQMKDKQDEEQRLKEEEEEKKRKEEEEAEEDEEDKDDKEDEDEDEEDKDEEEEEAAAGQAKDEL</sequence>
<accession>P15253</accession>
<proteinExistence type="evidence at protein level"/>
<reference key="1">
    <citation type="journal article" date="1989" name="J. Biol. Chem.">
        <title>Molecular cloning of the high affinity calcium-binding protein (calreticulin) of skeletal muscle sarcoplasmic reticulum.</title>
        <authorList>
            <person name="Fliegel L."/>
            <person name="Burns K."/>
            <person name="Maclennan D.H."/>
            <person name="Reithmeier R.A.F."/>
            <person name="Michalak M."/>
        </authorList>
    </citation>
    <scope>NUCLEOTIDE SEQUENCE [MRNA]</scope>
    <source>
        <tissue>Slow-twitch skeletal muscle</tissue>
    </source>
</reference>
<reference key="2">
    <citation type="journal article" date="1991" name="Biochem. Biophys. Res. Commun.">
        <title>Fast-twitch and slow-twitch skeletal muscles express the same isoform of calreticulin.</title>
        <authorList>
            <person name="Fliegel L."/>
            <person name="Michalak M."/>
        </authorList>
    </citation>
    <scope>NUCLEOTIDE SEQUENCE [MRNA]</scope>
    <source>
        <tissue>Fast-twitch skeletal muscle</tissue>
    </source>
</reference>
<reference key="3">
    <citation type="journal article" date="1990" name="Biochem. J.">
        <title>Calreticulin is a candidate for a calsequestrin-like function in Ca2(+)-storage compartments (calciosomes) of liver and brain.</title>
        <authorList>
            <person name="Treves S."/>
            <person name="de Mattei M."/>
            <person name="Lanfredi M."/>
            <person name="Villa A."/>
            <person name="Green N.M."/>
            <person name="Maclennan D.H."/>
            <person name="Meldolesi J."/>
            <person name="Pozzan T."/>
        </authorList>
    </citation>
    <scope>PROTEIN SEQUENCE OF 18-36</scope>
</reference>
<reference key="4">
    <citation type="journal article" date="1991" name="J. Biol. Chem.">
        <title>Calreticulin, and not calsequestrin, is the major calcium binding protein of smooth muscle sarcoplasmic reticulum and liver endoplasmic reticulum.</title>
        <authorList>
            <person name="Milner R.E."/>
            <person name="Baksh S."/>
            <person name="Shemanko C."/>
            <person name="Carpenter M.R."/>
            <person name="Smillie L."/>
            <person name="Vance J.E."/>
            <person name="Opas M."/>
            <person name="Michalak M."/>
        </authorList>
    </citation>
    <scope>PROTEIN SEQUENCE OF 18-46</scope>
</reference>
<reference key="5">
    <citation type="journal article" date="1991" name="Biochemistry">
        <title>Evidence for complex formation between rabbit lung flavin-containing monooxygenase and calreticulin.</title>
        <authorList>
            <person name="Guan S."/>
            <person name="Falick A.M."/>
            <person name="Williams D.E."/>
            <person name="Cashman J.R."/>
        </authorList>
    </citation>
    <scope>PARTIAL PROTEIN SEQUENCE</scope>
    <source>
        <tissue>Lung</tissue>
    </source>
</reference>
<reference key="6">
    <citation type="journal article" date="1999" name="EMBO J.">
        <title>Calreticulin functions in vitro as a molecular chaperone for both glycosylated and non-glycosylated proteins.</title>
        <authorList>
            <person name="Saito Y."/>
            <person name="Ihara Y."/>
            <person name="Leach M.R."/>
            <person name="Cohen-Doyle M.F."/>
            <person name="Williams D.B."/>
        </authorList>
    </citation>
    <scope>FUNCTION</scope>
</reference>
<reference key="7">
    <citation type="journal article" date="1995" name="FEBS Lett.">
        <title>Identification of the Zn2+ binding region in calreticulin.</title>
        <authorList>
            <person name="Baksh S."/>
            <person name="Spamer C."/>
            <person name="Heilmann C."/>
            <person name="Michalak M."/>
        </authorList>
    </citation>
    <scope>ZINC-BINDING DOMAIN</scope>
</reference>
<reference key="8">
    <citation type="journal article" date="2003" name="J. Biol. Chem.">
        <title>Identification of an N-domain histidine essential for chaperone function in calreticulin.</title>
        <authorList>
            <person name="Guo L."/>
            <person name="Groenendyk J."/>
            <person name="Papp S."/>
            <person name="Dabrowska M."/>
            <person name="Knoblach B."/>
            <person name="Kay C."/>
            <person name="Parker J.M."/>
            <person name="Opas M."/>
            <person name="Michalak M."/>
        </authorList>
    </citation>
    <scope>MUTAGENESIS OF HIS-170</scope>
</reference>
<name>CALR_RABIT</name>
<dbReference type="EMBL" id="J05138">
    <property type="protein sequence ID" value="AAA31188.1"/>
    <property type="molecule type" value="mRNA"/>
</dbReference>
<dbReference type="PIR" id="A34154">
    <property type="entry name" value="A34154"/>
</dbReference>
<dbReference type="PIR" id="C33208">
    <property type="entry name" value="C33208"/>
</dbReference>
<dbReference type="PIR" id="D33208">
    <property type="entry name" value="D33208"/>
</dbReference>
<dbReference type="PIR" id="S13046">
    <property type="entry name" value="S13046"/>
</dbReference>
<dbReference type="RefSeq" id="NP_001075704.1">
    <property type="nucleotide sequence ID" value="NM_001082235.1"/>
</dbReference>
<dbReference type="RefSeq" id="XP_069914499.1">
    <property type="nucleotide sequence ID" value="XM_070058398.1"/>
</dbReference>
<dbReference type="BMRB" id="P15253"/>
<dbReference type="SMR" id="P15253"/>
<dbReference type="BioGRID" id="1172073">
    <property type="interactions" value="1"/>
</dbReference>
<dbReference type="CORUM" id="P15253"/>
<dbReference type="FunCoup" id="P15253">
    <property type="interactions" value="1651"/>
</dbReference>
<dbReference type="IntAct" id="P15253">
    <property type="interactions" value="4"/>
</dbReference>
<dbReference type="GeneID" id="100009050"/>
<dbReference type="KEGG" id="ocu:100009050"/>
<dbReference type="CTD" id="811"/>
<dbReference type="InParanoid" id="P15253"/>
<dbReference type="OrthoDB" id="1938156at2759"/>
<dbReference type="Proteomes" id="UP000001811">
    <property type="component" value="Unplaced"/>
</dbReference>
<dbReference type="GO" id="GO:0009986">
    <property type="term" value="C:cell surface"/>
    <property type="evidence" value="ECO:0007669"/>
    <property type="project" value="UniProtKB-SubCell"/>
</dbReference>
<dbReference type="GO" id="GO:0060473">
    <property type="term" value="C:cortical granule"/>
    <property type="evidence" value="ECO:0000250"/>
    <property type="project" value="UniProtKB"/>
</dbReference>
<dbReference type="GO" id="GO:0044194">
    <property type="term" value="C:cytolytic granule"/>
    <property type="evidence" value="ECO:0007669"/>
    <property type="project" value="UniProtKB-SubCell"/>
</dbReference>
<dbReference type="GO" id="GO:0005829">
    <property type="term" value="C:cytosol"/>
    <property type="evidence" value="ECO:0007669"/>
    <property type="project" value="UniProtKB-SubCell"/>
</dbReference>
<dbReference type="GO" id="GO:0005789">
    <property type="term" value="C:endoplasmic reticulum membrane"/>
    <property type="evidence" value="ECO:0007669"/>
    <property type="project" value="TreeGrafter"/>
</dbReference>
<dbReference type="GO" id="GO:0005576">
    <property type="term" value="C:extracellular region"/>
    <property type="evidence" value="ECO:0007669"/>
    <property type="project" value="UniProtKB-KW"/>
</dbReference>
<dbReference type="GO" id="GO:0016529">
    <property type="term" value="C:sarcoplasmic reticulum"/>
    <property type="evidence" value="ECO:0000314"/>
    <property type="project" value="CAFA"/>
</dbReference>
<dbReference type="GO" id="GO:0033018">
    <property type="term" value="C:sarcoplasmic reticulum lumen"/>
    <property type="evidence" value="ECO:0007669"/>
    <property type="project" value="UniProtKB-SubCell"/>
</dbReference>
<dbReference type="GO" id="GO:0005509">
    <property type="term" value="F:calcium ion binding"/>
    <property type="evidence" value="ECO:0000314"/>
    <property type="project" value="CAFA"/>
</dbReference>
<dbReference type="GO" id="GO:0030246">
    <property type="term" value="F:carbohydrate binding"/>
    <property type="evidence" value="ECO:0007669"/>
    <property type="project" value="UniProtKB-KW"/>
</dbReference>
<dbReference type="GO" id="GO:0051082">
    <property type="term" value="F:unfolded protein binding"/>
    <property type="evidence" value="ECO:0007669"/>
    <property type="project" value="InterPro"/>
</dbReference>
<dbReference type="GO" id="GO:0036503">
    <property type="term" value="P:ERAD pathway"/>
    <property type="evidence" value="ECO:0007669"/>
    <property type="project" value="TreeGrafter"/>
</dbReference>
<dbReference type="GO" id="GO:0006457">
    <property type="term" value="P:protein folding"/>
    <property type="evidence" value="ECO:0007669"/>
    <property type="project" value="InterPro"/>
</dbReference>
<dbReference type="GO" id="GO:0050821">
    <property type="term" value="P:protein stabilization"/>
    <property type="evidence" value="ECO:0000250"/>
    <property type="project" value="UniProtKB"/>
</dbReference>
<dbReference type="FunFam" id="2.10.250.10:FF:000002">
    <property type="entry name" value="Calreticulin"/>
    <property type="match status" value="1"/>
</dbReference>
<dbReference type="FunFam" id="2.60.120.200:FF:000122">
    <property type="entry name" value="Calreticulin 3"/>
    <property type="match status" value="1"/>
</dbReference>
<dbReference type="Gene3D" id="2.60.120.200">
    <property type="match status" value="1"/>
</dbReference>
<dbReference type="Gene3D" id="2.10.250.10">
    <property type="entry name" value="Calreticulin/calnexin, P domain"/>
    <property type="match status" value="1"/>
</dbReference>
<dbReference type="InterPro" id="IPR001580">
    <property type="entry name" value="Calret/calnex"/>
</dbReference>
<dbReference type="InterPro" id="IPR018124">
    <property type="entry name" value="Calret/calnex_CS"/>
</dbReference>
<dbReference type="InterPro" id="IPR009169">
    <property type="entry name" value="Calreticulin"/>
</dbReference>
<dbReference type="InterPro" id="IPR009033">
    <property type="entry name" value="Calreticulin/calnexin_P_dom_sf"/>
</dbReference>
<dbReference type="InterPro" id="IPR013320">
    <property type="entry name" value="ConA-like_dom_sf"/>
</dbReference>
<dbReference type="PANTHER" id="PTHR11073:SF16">
    <property type="entry name" value="CALRETICULIN"/>
    <property type="match status" value="1"/>
</dbReference>
<dbReference type="PANTHER" id="PTHR11073">
    <property type="entry name" value="CALRETICULIN AND CALNEXIN"/>
    <property type="match status" value="1"/>
</dbReference>
<dbReference type="Pfam" id="PF00262">
    <property type="entry name" value="Calreticulin"/>
    <property type="match status" value="2"/>
</dbReference>
<dbReference type="PIRSF" id="PIRSF002356">
    <property type="entry name" value="Calreticulin"/>
    <property type="match status" value="1"/>
</dbReference>
<dbReference type="PRINTS" id="PR00626">
    <property type="entry name" value="CALRETICULIN"/>
</dbReference>
<dbReference type="SUPFAM" id="SSF49899">
    <property type="entry name" value="Concanavalin A-like lectins/glucanases"/>
    <property type="match status" value="1"/>
</dbReference>
<dbReference type="SUPFAM" id="SSF63887">
    <property type="entry name" value="P-domain of calnexin/calreticulin"/>
    <property type="match status" value="1"/>
</dbReference>
<dbReference type="PROSITE" id="PS00803">
    <property type="entry name" value="CALRETICULIN_1"/>
    <property type="match status" value="1"/>
</dbReference>
<dbReference type="PROSITE" id="PS00804">
    <property type="entry name" value="CALRETICULIN_2"/>
    <property type="match status" value="1"/>
</dbReference>
<dbReference type="PROSITE" id="PS00805">
    <property type="entry name" value="CALRETICULIN_REPEAT"/>
    <property type="match status" value="3"/>
</dbReference>
<dbReference type="PROSITE" id="PS00014">
    <property type="entry name" value="ER_TARGET"/>
    <property type="match status" value="1"/>
</dbReference>
<organism>
    <name type="scientific">Oryctolagus cuniculus</name>
    <name type="common">Rabbit</name>
    <dbReference type="NCBI Taxonomy" id="9986"/>
    <lineage>
        <taxon>Eukaryota</taxon>
        <taxon>Metazoa</taxon>
        <taxon>Chordata</taxon>
        <taxon>Craniata</taxon>
        <taxon>Vertebrata</taxon>
        <taxon>Euteleostomi</taxon>
        <taxon>Mammalia</taxon>
        <taxon>Eutheria</taxon>
        <taxon>Euarchontoglires</taxon>
        <taxon>Glires</taxon>
        <taxon>Lagomorpha</taxon>
        <taxon>Leporidae</taxon>
        <taxon>Oryctolagus</taxon>
    </lineage>
</organism>